<dbReference type="EC" id="4.1.99.12" evidence="1"/>
<dbReference type="EMBL" id="CP000800">
    <property type="protein sequence ID" value="ABV18572.1"/>
    <property type="molecule type" value="Genomic_DNA"/>
</dbReference>
<dbReference type="RefSeq" id="WP_001076997.1">
    <property type="nucleotide sequence ID" value="NC_009801.1"/>
</dbReference>
<dbReference type="SMR" id="A7ZRS4"/>
<dbReference type="GeneID" id="93778953"/>
<dbReference type="KEGG" id="ecw:EcE24377A_3506"/>
<dbReference type="HOGENOM" id="CLU_020273_3_0_6"/>
<dbReference type="UniPathway" id="UPA00275">
    <property type="reaction ID" value="UER00399"/>
</dbReference>
<dbReference type="Proteomes" id="UP000001122">
    <property type="component" value="Chromosome"/>
</dbReference>
<dbReference type="GO" id="GO:0005829">
    <property type="term" value="C:cytosol"/>
    <property type="evidence" value="ECO:0007669"/>
    <property type="project" value="TreeGrafter"/>
</dbReference>
<dbReference type="GO" id="GO:0008686">
    <property type="term" value="F:3,4-dihydroxy-2-butanone-4-phosphate synthase activity"/>
    <property type="evidence" value="ECO:0007669"/>
    <property type="project" value="UniProtKB-UniRule"/>
</dbReference>
<dbReference type="GO" id="GO:0000287">
    <property type="term" value="F:magnesium ion binding"/>
    <property type="evidence" value="ECO:0007669"/>
    <property type="project" value="UniProtKB-UniRule"/>
</dbReference>
<dbReference type="GO" id="GO:0030145">
    <property type="term" value="F:manganese ion binding"/>
    <property type="evidence" value="ECO:0007669"/>
    <property type="project" value="UniProtKB-UniRule"/>
</dbReference>
<dbReference type="GO" id="GO:0009231">
    <property type="term" value="P:riboflavin biosynthetic process"/>
    <property type="evidence" value="ECO:0007669"/>
    <property type="project" value="UniProtKB-UniRule"/>
</dbReference>
<dbReference type="FunFam" id="3.90.870.10:FF:000002">
    <property type="entry name" value="3,4-dihydroxy-2-butanone 4-phosphate synthase"/>
    <property type="match status" value="1"/>
</dbReference>
<dbReference type="Gene3D" id="3.90.870.10">
    <property type="entry name" value="DHBP synthase"/>
    <property type="match status" value="1"/>
</dbReference>
<dbReference type="HAMAP" id="MF_00180">
    <property type="entry name" value="RibB"/>
    <property type="match status" value="1"/>
</dbReference>
<dbReference type="InterPro" id="IPR017945">
    <property type="entry name" value="DHBP_synth_RibB-like_a/b_dom"/>
</dbReference>
<dbReference type="InterPro" id="IPR000422">
    <property type="entry name" value="DHBP_synthase_RibB"/>
</dbReference>
<dbReference type="NCBIfam" id="TIGR00506">
    <property type="entry name" value="ribB"/>
    <property type="match status" value="1"/>
</dbReference>
<dbReference type="PANTHER" id="PTHR21327:SF38">
    <property type="entry name" value="3,4-DIHYDROXY-2-BUTANONE 4-PHOSPHATE SYNTHASE"/>
    <property type="match status" value="1"/>
</dbReference>
<dbReference type="PANTHER" id="PTHR21327">
    <property type="entry name" value="GTP CYCLOHYDROLASE II-RELATED"/>
    <property type="match status" value="1"/>
</dbReference>
<dbReference type="Pfam" id="PF00926">
    <property type="entry name" value="DHBP_synthase"/>
    <property type="match status" value="1"/>
</dbReference>
<dbReference type="SUPFAM" id="SSF55821">
    <property type="entry name" value="YrdC/RibB"/>
    <property type="match status" value="1"/>
</dbReference>
<name>RIBB_ECO24</name>
<gene>
    <name evidence="1" type="primary">ribB</name>
    <name type="ordered locus">EcE24377A_3506</name>
</gene>
<proteinExistence type="inferred from homology"/>
<organism>
    <name type="scientific">Escherichia coli O139:H28 (strain E24377A / ETEC)</name>
    <dbReference type="NCBI Taxonomy" id="331111"/>
    <lineage>
        <taxon>Bacteria</taxon>
        <taxon>Pseudomonadati</taxon>
        <taxon>Pseudomonadota</taxon>
        <taxon>Gammaproteobacteria</taxon>
        <taxon>Enterobacterales</taxon>
        <taxon>Enterobacteriaceae</taxon>
        <taxon>Escherichia</taxon>
    </lineage>
</organism>
<protein>
    <recommendedName>
        <fullName evidence="1">3,4-dihydroxy-2-butanone 4-phosphate synthase</fullName>
        <shortName evidence="1">DHBP synthase</shortName>
        <ecNumber evidence="1">4.1.99.12</ecNumber>
    </recommendedName>
</protein>
<comment type="function">
    <text evidence="1">Catalyzes the conversion of D-ribulose 5-phosphate to formate and 3,4-dihydroxy-2-butanone 4-phosphate.</text>
</comment>
<comment type="catalytic activity">
    <reaction evidence="1">
        <text>D-ribulose 5-phosphate = (2S)-2-hydroxy-3-oxobutyl phosphate + formate + H(+)</text>
        <dbReference type="Rhea" id="RHEA:18457"/>
        <dbReference type="ChEBI" id="CHEBI:15378"/>
        <dbReference type="ChEBI" id="CHEBI:15740"/>
        <dbReference type="ChEBI" id="CHEBI:58121"/>
        <dbReference type="ChEBI" id="CHEBI:58830"/>
        <dbReference type="EC" id="4.1.99.12"/>
    </reaction>
</comment>
<comment type="cofactor">
    <cofactor evidence="1">
        <name>Mg(2+)</name>
        <dbReference type="ChEBI" id="CHEBI:18420"/>
    </cofactor>
    <cofactor evidence="1">
        <name>Mn(2+)</name>
        <dbReference type="ChEBI" id="CHEBI:29035"/>
    </cofactor>
    <text evidence="1">Binds 2 divalent metal cations per subunit. Magnesium or manganese.</text>
</comment>
<comment type="pathway">
    <text evidence="1">Cofactor biosynthesis; riboflavin biosynthesis; 2-hydroxy-3-oxobutyl phosphate from D-ribulose 5-phosphate: step 1/1.</text>
</comment>
<comment type="subunit">
    <text evidence="1">Homodimer.</text>
</comment>
<comment type="similarity">
    <text evidence="1">Belongs to the DHBP synthase family.</text>
</comment>
<accession>A7ZRS4</accession>
<sequence>MNQTLLSSFGTPFERVENALAALREGRGVMVLDDEDRENEGDMIFPAETMTVEQMALTIRHGSGIVCLCITEDRRKQLDLPMMVENNTSAYGTGFTVTIEAAEGVTTGVSAADRITTVRAAIADGAKPSDLNRPGHVFPLRAQAGGVLTRGGHTEATIDLMTLAGFKPAGVLCELTNDDGTMARAPECIEFANKHNMALVTIEDLVAYRQAHERKAS</sequence>
<evidence type="ECO:0000255" key="1">
    <source>
        <dbReference type="HAMAP-Rule" id="MF_00180"/>
    </source>
</evidence>
<keyword id="KW-0456">Lyase</keyword>
<keyword id="KW-0460">Magnesium</keyword>
<keyword id="KW-0464">Manganese</keyword>
<keyword id="KW-0479">Metal-binding</keyword>
<keyword id="KW-1185">Reference proteome</keyword>
<keyword id="KW-0686">Riboflavin biosynthesis</keyword>
<reference key="1">
    <citation type="journal article" date="2008" name="J. Bacteriol.">
        <title>The pangenome structure of Escherichia coli: comparative genomic analysis of E. coli commensal and pathogenic isolates.</title>
        <authorList>
            <person name="Rasko D.A."/>
            <person name="Rosovitz M.J."/>
            <person name="Myers G.S.A."/>
            <person name="Mongodin E.F."/>
            <person name="Fricke W.F."/>
            <person name="Gajer P."/>
            <person name="Crabtree J."/>
            <person name="Sebaihia M."/>
            <person name="Thomson N.R."/>
            <person name="Chaudhuri R."/>
            <person name="Henderson I.R."/>
            <person name="Sperandio V."/>
            <person name="Ravel J."/>
        </authorList>
    </citation>
    <scope>NUCLEOTIDE SEQUENCE [LARGE SCALE GENOMIC DNA]</scope>
    <source>
        <strain>E24377A / ETEC</strain>
    </source>
</reference>
<feature type="chain" id="PRO_1000058378" description="3,4-dihydroxy-2-butanone 4-phosphate synthase">
    <location>
        <begin position="1"/>
        <end position="217"/>
    </location>
</feature>
<feature type="binding site" evidence="1">
    <location>
        <begin position="37"/>
        <end position="38"/>
    </location>
    <ligand>
        <name>D-ribulose 5-phosphate</name>
        <dbReference type="ChEBI" id="CHEBI:58121"/>
    </ligand>
</feature>
<feature type="binding site" evidence="1">
    <location>
        <position position="38"/>
    </location>
    <ligand>
        <name>Mg(2+)</name>
        <dbReference type="ChEBI" id="CHEBI:18420"/>
        <label>1</label>
    </ligand>
</feature>
<feature type="binding site" evidence="1">
    <location>
        <position position="38"/>
    </location>
    <ligand>
        <name>Mg(2+)</name>
        <dbReference type="ChEBI" id="CHEBI:18420"/>
        <label>2</label>
    </ligand>
</feature>
<feature type="binding site" evidence="1">
    <location>
        <position position="42"/>
    </location>
    <ligand>
        <name>D-ribulose 5-phosphate</name>
        <dbReference type="ChEBI" id="CHEBI:58121"/>
    </ligand>
</feature>
<feature type="binding site" evidence="1">
    <location>
        <begin position="150"/>
        <end position="154"/>
    </location>
    <ligand>
        <name>D-ribulose 5-phosphate</name>
        <dbReference type="ChEBI" id="CHEBI:58121"/>
    </ligand>
</feature>
<feature type="binding site" evidence="1">
    <location>
        <position position="153"/>
    </location>
    <ligand>
        <name>Mg(2+)</name>
        <dbReference type="ChEBI" id="CHEBI:18420"/>
        <label>2</label>
    </ligand>
</feature>
<feature type="binding site" evidence="1">
    <location>
        <position position="174"/>
    </location>
    <ligand>
        <name>D-ribulose 5-phosphate</name>
        <dbReference type="ChEBI" id="CHEBI:58121"/>
    </ligand>
</feature>
<feature type="site" description="Essential for catalytic activity" evidence="1">
    <location>
        <position position="136"/>
    </location>
</feature>
<feature type="site" description="Essential for catalytic activity" evidence="1">
    <location>
        <position position="174"/>
    </location>
</feature>